<dbReference type="EMBL" id="AY462122">
    <property type="protein sequence ID" value="AAS44557.1"/>
    <property type="molecule type" value="mRNA"/>
</dbReference>
<dbReference type="EMBL" id="CP002688">
    <property type="protein sequence ID" value="AED93845.1"/>
    <property type="molecule type" value="Genomic_DNA"/>
</dbReference>
<dbReference type="EMBL" id="CP002688">
    <property type="protein sequence ID" value="AED93846.1"/>
    <property type="molecule type" value="Genomic_DNA"/>
</dbReference>
<dbReference type="EMBL" id="AY056110">
    <property type="protein sequence ID" value="AAL06997.1"/>
    <property type="molecule type" value="mRNA"/>
</dbReference>
<dbReference type="EMBL" id="BT003095">
    <property type="protein sequence ID" value="AAO23892.1"/>
    <property type="molecule type" value="mRNA"/>
</dbReference>
<dbReference type="EMBL" id="AK222050">
    <property type="protein sequence ID" value="BAD94815.1"/>
    <property type="status" value="ALT_INIT"/>
    <property type="molecule type" value="mRNA"/>
</dbReference>
<dbReference type="RefSeq" id="NP_568509.1">
    <molecule id="Q5QIT3-1"/>
    <property type="nucleotide sequence ID" value="NM_122768.2"/>
</dbReference>
<dbReference type="RefSeq" id="NP_851089.1">
    <molecule id="Q5QIT3-2"/>
    <property type="nucleotide sequence ID" value="NM_180758.1"/>
</dbReference>
<dbReference type="SMR" id="Q5QIT3"/>
<dbReference type="BioGRID" id="18276">
    <property type="interactions" value="5"/>
</dbReference>
<dbReference type="FunCoup" id="Q5QIT3">
    <property type="interactions" value="2698"/>
</dbReference>
<dbReference type="STRING" id="3702.Q5QIT3"/>
<dbReference type="iPTMnet" id="Q5QIT3"/>
<dbReference type="PaxDb" id="3702-AT5G28850.2"/>
<dbReference type="ProMEX" id="Q5QIT3"/>
<dbReference type="ProteomicsDB" id="243263">
    <molecule id="Q5QIT3-1"/>
</dbReference>
<dbReference type="EnsemblPlants" id="AT5G28850.1">
    <molecule id="Q5QIT3-2"/>
    <property type="protein sequence ID" value="AT5G28850.1"/>
    <property type="gene ID" value="AT5G28850"/>
</dbReference>
<dbReference type="EnsemblPlants" id="AT5G28850.2">
    <molecule id="Q5QIT3-1"/>
    <property type="protein sequence ID" value="AT5G28850.2"/>
    <property type="gene ID" value="AT5G28850"/>
</dbReference>
<dbReference type="GeneID" id="833004"/>
<dbReference type="Gramene" id="AT5G28850.1">
    <molecule id="Q5QIT3-2"/>
    <property type="protein sequence ID" value="AT5G28850.1"/>
    <property type="gene ID" value="AT5G28850"/>
</dbReference>
<dbReference type="Gramene" id="AT5G28850.2">
    <molecule id="Q5QIT3-1"/>
    <property type="protein sequence ID" value="AT5G28850.2"/>
    <property type="gene ID" value="AT5G28850"/>
</dbReference>
<dbReference type="KEGG" id="ath:AT5G28850"/>
<dbReference type="Araport" id="AT5G28850"/>
<dbReference type="TAIR" id="AT5G28850"/>
<dbReference type="eggNOG" id="KOG2562">
    <property type="taxonomic scope" value="Eukaryota"/>
</dbReference>
<dbReference type="HOGENOM" id="CLU_019589_3_0_1"/>
<dbReference type="InParanoid" id="Q5QIT3"/>
<dbReference type="OMA" id="GPENECY"/>
<dbReference type="PhylomeDB" id="Q5QIT3"/>
<dbReference type="PRO" id="PR:Q5QIT3"/>
<dbReference type="Proteomes" id="UP000006548">
    <property type="component" value="Chromosome 5"/>
</dbReference>
<dbReference type="ExpressionAtlas" id="Q5QIT3">
    <property type="expression patterns" value="baseline and differential"/>
</dbReference>
<dbReference type="GO" id="GO:0005509">
    <property type="term" value="F:calcium ion binding"/>
    <property type="evidence" value="ECO:0007669"/>
    <property type="project" value="InterPro"/>
</dbReference>
<dbReference type="CDD" id="cd21504">
    <property type="entry name" value="PPP2R3A_B-like"/>
    <property type="match status" value="1"/>
</dbReference>
<dbReference type="FunFam" id="1.10.238.220:FF:000003">
    <property type="entry name" value="Phosphoprotein phosphatase 2A regulatory subunit"/>
    <property type="match status" value="1"/>
</dbReference>
<dbReference type="FunFam" id="1.10.238.230:FF:000002">
    <property type="entry name" value="Serine/threonine protein phosphatase 2A regulatory subunit B''alpha"/>
    <property type="match status" value="1"/>
</dbReference>
<dbReference type="FunFam" id="1.10.238.10:FF:000067">
    <property type="entry name" value="serine/threonine protein phosphatase 2A regulatory subunit B''beta-like"/>
    <property type="match status" value="1"/>
</dbReference>
<dbReference type="Gene3D" id="1.10.238.220">
    <property type="match status" value="1"/>
</dbReference>
<dbReference type="Gene3D" id="1.10.238.230">
    <property type="match status" value="1"/>
</dbReference>
<dbReference type="Gene3D" id="1.10.238.10">
    <property type="entry name" value="EF-hand"/>
    <property type="match status" value="1"/>
</dbReference>
<dbReference type="InterPro" id="IPR011992">
    <property type="entry name" value="EF-hand-dom_pair"/>
</dbReference>
<dbReference type="InterPro" id="IPR041534">
    <property type="entry name" value="EF-hand_13"/>
</dbReference>
<dbReference type="InterPro" id="IPR018247">
    <property type="entry name" value="EF_Hand_1_Ca_BS"/>
</dbReference>
<dbReference type="InterPro" id="IPR002048">
    <property type="entry name" value="EF_hand_dom"/>
</dbReference>
<dbReference type="PANTHER" id="PTHR14095:SF0">
    <property type="entry name" value="MIP22305P"/>
    <property type="match status" value="1"/>
</dbReference>
<dbReference type="PANTHER" id="PTHR14095">
    <property type="entry name" value="PHOSPHATASE 2A REGULATORY SUBUNIT-RELATED"/>
    <property type="match status" value="1"/>
</dbReference>
<dbReference type="Pfam" id="PF17958">
    <property type="entry name" value="EF-hand_13"/>
    <property type="match status" value="1"/>
</dbReference>
<dbReference type="Pfam" id="PF13499">
    <property type="entry name" value="EF-hand_7"/>
    <property type="match status" value="1"/>
</dbReference>
<dbReference type="SUPFAM" id="SSF47473">
    <property type="entry name" value="EF-hand"/>
    <property type="match status" value="2"/>
</dbReference>
<dbReference type="PROSITE" id="PS00018">
    <property type="entry name" value="EF_HAND_1"/>
    <property type="match status" value="1"/>
</dbReference>
<dbReference type="PROSITE" id="PS50222">
    <property type="entry name" value="EF_HAND_2"/>
    <property type="match status" value="3"/>
</dbReference>
<proteinExistence type="evidence at protein level"/>
<keyword id="KW-0025">Alternative splicing</keyword>
<keyword id="KW-0106">Calcium</keyword>
<keyword id="KW-0479">Metal-binding</keyword>
<keyword id="KW-1185">Reference proteome</keyword>
<keyword id="KW-0677">Repeat</keyword>
<accession>Q5QIT3</accession>
<accession>Q56WJ0</accession>
<accession>Q940C6</accession>
<evidence type="ECO:0000255" key="1">
    <source>
        <dbReference type="PROSITE-ProRule" id="PRU00448"/>
    </source>
</evidence>
<evidence type="ECO:0000256" key="2">
    <source>
        <dbReference type="SAM" id="MobiDB-lite"/>
    </source>
</evidence>
<evidence type="ECO:0000269" key="3">
    <source>
    </source>
</evidence>
<evidence type="ECO:0000303" key="4">
    <source>
    </source>
</evidence>
<evidence type="ECO:0000305" key="5"/>
<feature type="chain" id="PRO_0000422788" description="Serine/threonine protein phosphatase 2A regulatory subunit B''beta">
    <location>
        <begin position="1"/>
        <end position="536"/>
    </location>
</feature>
<feature type="domain" description="EF-hand 1" evidence="1">
    <location>
        <begin position="174"/>
        <end position="209"/>
    </location>
</feature>
<feature type="domain" description="EF-hand 2" evidence="1">
    <location>
        <begin position="261"/>
        <end position="296"/>
    </location>
</feature>
<feature type="domain" description="EF-hand 3" evidence="1">
    <location>
        <begin position="387"/>
        <end position="422"/>
    </location>
</feature>
<feature type="region of interest" description="Disordered" evidence="2">
    <location>
        <begin position="69"/>
        <end position="108"/>
    </location>
</feature>
<feature type="region of interest" description="Disordered" evidence="2">
    <location>
        <begin position="517"/>
        <end position="536"/>
    </location>
</feature>
<feature type="compositionally biased region" description="Polar residues" evidence="2">
    <location>
        <begin position="69"/>
        <end position="79"/>
    </location>
</feature>
<feature type="compositionally biased region" description="Polar residues" evidence="2">
    <location>
        <begin position="98"/>
        <end position="108"/>
    </location>
</feature>
<feature type="compositionally biased region" description="Acidic residues" evidence="2">
    <location>
        <begin position="526"/>
        <end position="536"/>
    </location>
</feature>
<feature type="binding site" evidence="1">
    <location>
        <position position="400"/>
    </location>
    <ligand>
        <name>Ca(2+)</name>
        <dbReference type="ChEBI" id="CHEBI:29108"/>
    </ligand>
</feature>
<feature type="binding site" evidence="1">
    <location>
        <position position="402"/>
    </location>
    <ligand>
        <name>Ca(2+)</name>
        <dbReference type="ChEBI" id="CHEBI:29108"/>
    </ligand>
</feature>
<feature type="binding site" evidence="1">
    <location>
        <position position="404"/>
    </location>
    <ligand>
        <name>Ca(2+)</name>
        <dbReference type="ChEBI" id="CHEBI:29108"/>
    </ligand>
</feature>
<feature type="binding site" evidence="1">
    <location>
        <position position="411"/>
    </location>
    <ligand>
        <name>Ca(2+)</name>
        <dbReference type="ChEBI" id="CHEBI:29108"/>
    </ligand>
</feature>
<feature type="splice variant" id="VSP_046803" description="In isoform 2." evidence="4">
    <original>MVDTVIPGDMACLDADLLQLQEMSSFVLNSKPGFTQKLFDQWLSLPEAQRQVGSLLKDAVAGAPINVTGSASGSNSATIPSMFPAGSAPPLSPRSCGSPRTTKQRAPSNLGSTLKVVNEPVKEPIPQFYFQNGRPPPSEIKEQCMFRINHFFYGHMDGLQIQEFKLVTREICKLPSFFSTSLFRKIDLNNTGFVTRDAFIDFWVNGNMLIMDTTTQIFKILKQKDQSFIVK</original>
    <variation>MKASLYSRFYSFLFFFSWQ</variation>
    <location>
        <begin position="1"/>
        <end position="231"/>
    </location>
</feature>
<protein>
    <recommendedName>
        <fullName>Serine/threonine protein phosphatase 2A regulatory subunit B''beta</fullName>
        <shortName>AtB''beta</shortName>
    </recommendedName>
    <alternativeName>
        <fullName>Serine/threonine protein phosphatase 2A regulatory subunit B'' beta 1 isoform</fullName>
        <shortName>PP2A, B'' subunit, beta 1 isoform</shortName>
    </alternativeName>
</protein>
<name>2AB2B_ARATH</name>
<comment type="function">
    <text evidence="3">Regulatory subunit of type 2A protein phosphatase. Involved in post-transcriptional regulation of HMGR but not in root growth regulation in response to salt.</text>
</comment>
<comment type="subunit">
    <text evidence="3">PP2A consists of a common heterodimeric core enzyme, composed of a 36 kDa catalytic subunit (subunit C) and a 65 kDa constant regulatory subunit (PR65 or subunit A), that associates with a variety of regulatory subunits. Proteins that associate with the core dimer include three families of regulatory subunits B (the R2/B/PR55/B55, R3/B''/PR72/PR130/PR59 and R5/B'/B56 families) and cell signaling molecules. Interacts with HMGR1L and HMGR1S (via N-terminus), but not with HMG2. Interacts with PP2AA1.</text>
</comment>
<comment type="alternative products">
    <event type="alternative splicing"/>
    <isoform>
        <id>Q5QIT3-1</id>
        <name>1</name>
        <sequence type="displayed"/>
    </isoform>
    <isoform>
        <id>Q5QIT3-2</id>
        <name>2</name>
        <sequence type="described" ref="VSP_046803"/>
    </isoform>
</comment>
<comment type="disruption phenotype">
    <text evidence="3">No visible phenotype.</text>
</comment>
<comment type="sequence caution" evidence="5">
    <conflict type="erroneous initiation">
        <sequence resource="EMBL-CDS" id="BAD94815"/>
    </conflict>
    <text>Truncated N-terminus.</text>
</comment>
<organism>
    <name type="scientific">Arabidopsis thaliana</name>
    <name type="common">Mouse-ear cress</name>
    <dbReference type="NCBI Taxonomy" id="3702"/>
    <lineage>
        <taxon>Eukaryota</taxon>
        <taxon>Viridiplantae</taxon>
        <taxon>Streptophyta</taxon>
        <taxon>Embryophyta</taxon>
        <taxon>Tracheophyta</taxon>
        <taxon>Spermatophyta</taxon>
        <taxon>Magnoliopsida</taxon>
        <taxon>eudicotyledons</taxon>
        <taxon>Gunneridae</taxon>
        <taxon>Pentapetalae</taxon>
        <taxon>rosids</taxon>
        <taxon>malvids</taxon>
        <taxon>Brassicales</taxon>
        <taxon>Brassicaceae</taxon>
        <taxon>Camelineae</taxon>
        <taxon>Arabidopsis</taxon>
    </lineage>
</organism>
<gene>
    <name type="primary">B''BETA</name>
    <name type="ordered locus">At5g28850</name>
    <name type="ORF">F7P1.30</name>
</gene>
<reference key="1">
    <citation type="journal article" date="2011" name="Plant Cell">
        <title>Multilevel control of Arabidopsis 3-hydroxy-3-methylglutaryl coenzyme A reductase by protein phosphatase 2A.</title>
        <authorList>
            <person name="Leivar P."/>
            <person name="Antolin-Llovera M."/>
            <person name="Ferrero S."/>
            <person name="Closa M."/>
            <person name="Arro M."/>
            <person name="Ferrer A."/>
            <person name="Boronat A."/>
            <person name="Campos N."/>
        </authorList>
    </citation>
    <scope>NUCLEOTIDE SEQUENCE [MRNA] (ISOFORM 1)</scope>
    <scope>INTERACTION WITH HMG1 AND PP2AA1</scope>
    <scope>FUNCTION</scope>
    <scope>DISRUPTION PHENOTYPE</scope>
    <scope>GENE FAMILY</scope>
    <scope>NOMENCLATURE</scope>
</reference>
<reference key="2">
    <citation type="journal article" date="2017" name="Plant J.">
        <title>Araport11: a complete reannotation of the Arabidopsis thaliana reference genome.</title>
        <authorList>
            <person name="Cheng C.Y."/>
            <person name="Krishnakumar V."/>
            <person name="Chan A.P."/>
            <person name="Thibaud-Nissen F."/>
            <person name="Schobel S."/>
            <person name="Town C.D."/>
        </authorList>
    </citation>
    <scope>GENOME REANNOTATION</scope>
    <source>
        <strain>cv. Columbia</strain>
    </source>
</reference>
<reference key="3">
    <citation type="journal article" date="2003" name="Science">
        <title>Empirical analysis of transcriptional activity in the Arabidopsis genome.</title>
        <authorList>
            <person name="Yamada K."/>
            <person name="Lim J."/>
            <person name="Dale J.M."/>
            <person name="Chen H."/>
            <person name="Shinn P."/>
            <person name="Palm C.J."/>
            <person name="Southwick A.M."/>
            <person name="Wu H.C."/>
            <person name="Kim C.J."/>
            <person name="Nguyen M."/>
            <person name="Pham P.K."/>
            <person name="Cheuk R.F."/>
            <person name="Karlin-Newmann G."/>
            <person name="Liu S.X."/>
            <person name="Lam B."/>
            <person name="Sakano H."/>
            <person name="Wu T."/>
            <person name="Yu G."/>
            <person name="Miranda M."/>
            <person name="Quach H.L."/>
            <person name="Tripp M."/>
            <person name="Chang C.H."/>
            <person name="Lee J.M."/>
            <person name="Toriumi M.J."/>
            <person name="Chan M.M."/>
            <person name="Tang C.C."/>
            <person name="Onodera C.S."/>
            <person name="Deng J.M."/>
            <person name="Akiyama K."/>
            <person name="Ansari Y."/>
            <person name="Arakawa T."/>
            <person name="Banh J."/>
            <person name="Banno F."/>
            <person name="Bowser L."/>
            <person name="Brooks S.Y."/>
            <person name="Carninci P."/>
            <person name="Chao Q."/>
            <person name="Choy N."/>
            <person name="Enju A."/>
            <person name="Goldsmith A.D."/>
            <person name="Gurjal M."/>
            <person name="Hansen N.F."/>
            <person name="Hayashizaki Y."/>
            <person name="Johnson-Hopson C."/>
            <person name="Hsuan V.W."/>
            <person name="Iida K."/>
            <person name="Karnes M."/>
            <person name="Khan S."/>
            <person name="Koesema E."/>
            <person name="Ishida J."/>
            <person name="Jiang P.X."/>
            <person name="Jones T."/>
            <person name="Kawai J."/>
            <person name="Kamiya A."/>
            <person name="Meyers C."/>
            <person name="Nakajima M."/>
            <person name="Narusaka M."/>
            <person name="Seki M."/>
            <person name="Sakurai T."/>
            <person name="Satou M."/>
            <person name="Tamse R."/>
            <person name="Vaysberg M."/>
            <person name="Wallender E.K."/>
            <person name="Wong C."/>
            <person name="Yamamura Y."/>
            <person name="Yuan S."/>
            <person name="Shinozaki K."/>
            <person name="Davis R.W."/>
            <person name="Theologis A."/>
            <person name="Ecker J.R."/>
        </authorList>
    </citation>
    <scope>NUCLEOTIDE SEQUENCE [LARGE SCALE MRNA] (ISOFORM 2)</scope>
    <source>
        <strain>cv. Columbia</strain>
    </source>
</reference>
<reference key="4">
    <citation type="submission" date="2005-03" db="EMBL/GenBank/DDBJ databases">
        <title>Large-scale analysis of RIKEN Arabidopsis full-length (RAFL) cDNAs.</title>
        <authorList>
            <person name="Totoki Y."/>
            <person name="Seki M."/>
            <person name="Ishida J."/>
            <person name="Nakajima M."/>
            <person name="Enju A."/>
            <person name="Kamiya A."/>
            <person name="Narusaka M."/>
            <person name="Shin-i T."/>
            <person name="Nakagawa M."/>
            <person name="Sakamoto N."/>
            <person name="Oishi K."/>
            <person name="Kohara Y."/>
            <person name="Kobayashi M."/>
            <person name="Toyoda A."/>
            <person name="Sakaki Y."/>
            <person name="Sakurai T."/>
            <person name="Iida K."/>
            <person name="Akiyama K."/>
            <person name="Satou M."/>
            <person name="Toyoda T."/>
            <person name="Konagaya A."/>
            <person name="Carninci P."/>
            <person name="Kawai J."/>
            <person name="Hayashizaki Y."/>
            <person name="Shinozaki K."/>
        </authorList>
    </citation>
    <scope>NUCLEOTIDE SEQUENCE [LARGE SCALE MRNA] OF 191-536 (ISOFORM 1)</scope>
</reference>
<sequence>MVDTVIPGDMACLDADLLQLQEMSSFVLNSKPGFTQKLFDQWLSLPEAQRQVGSLLKDAVAGAPINVTGSASGSNSATIPSMFPAGSAPPLSPRSCGSPRTTKQRAPSNLGSTLKVVNEPVKEPIPQFYFQNGRPPPSEIKEQCMFRINHFFYGHMDGLQIQEFKLVTREICKLPSFFSTSLFRKIDLNNTGFVTRDAFIDFWVNGNMLIMDTTTQIFKILKQKDQSFIVKDDFKPLLKELLATHPGLEFLQSTPEFQERYAETVTYRIFYYINRSGNGRITFRELKRGNLIDAMLHADEEEDINKVLRYFSYEHFYVIYCKFWELDTDHDFLIDKENLMRYGNHALTYRIVDRIFSQVARKFTSKVEGKMGYEDFVYFILAEEDKSSVPSLEYWFKCIDLDANGIITRNEMQFFYEEQLHRMECMAQEAVLFEDILCQMIDMIGPENESHITLHDLKGSKLSGNVFNILFNLNKFMAFETRDPFLIRQERENPTLTDWDRFAHREYIRLSMEEDVEDASNGSAEVWDDSSLEAPF</sequence>